<evidence type="ECO:0000255" key="1">
    <source>
        <dbReference type="HAMAP-Rule" id="MF_01305"/>
    </source>
</evidence>
<reference key="1">
    <citation type="journal article" date="2007" name="BMC Biol.">
        <title>A clade uniting the green algae Mesostigma viride and Chlorokybus atmophyticus represents the deepest branch of the Streptophyta in chloroplast genome-based phylogenies.</title>
        <authorList>
            <person name="Lemieux C."/>
            <person name="Otis C."/>
            <person name="Turmel M."/>
        </authorList>
    </citation>
    <scope>NUCLEOTIDE SEQUENCE [LARGE SCALE GENOMIC DNA]</scope>
    <source>
        <strain>SAG 48.80</strain>
    </source>
</reference>
<organism>
    <name type="scientific">Chlorokybus atmophyticus</name>
    <name type="common">Soil alga</name>
    <dbReference type="NCBI Taxonomy" id="3144"/>
    <lineage>
        <taxon>Eukaryota</taxon>
        <taxon>Viridiplantae</taxon>
        <taxon>Streptophyta</taxon>
        <taxon>Chlorokybophyceae</taxon>
        <taxon>Chlorokybales</taxon>
        <taxon>Chlorokybaceae</taxon>
        <taxon>Chlorokybus</taxon>
    </lineage>
</organism>
<geneLocation type="chloroplast"/>
<name>PSBJ_CHLAT</name>
<dbReference type="EMBL" id="DQ422812">
    <property type="protein sequence ID" value="ABD62219.2"/>
    <property type="molecule type" value="Genomic_DNA"/>
</dbReference>
<dbReference type="RefSeq" id="YP_001019126.1">
    <property type="nucleotide sequence ID" value="NC_008822.1"/>
</dbReference>
<dbReference type="SMR" id="Q19V80"/>
<dbReference type="GeneID" id="4783200"/>
<dbReference type="GO" id="GO:0009535">
    <property type="term" value="C:chloroplast thylakoid membrane"/>
    <property type="evidence" value="ECO:0007669"/>
    <property type="project" value="UniProtKB-SubCell"/>
</dbReference>
<dbReference type="GO" id="GO:0009539">
    <property type="term" value="C:photosystem II reaction center"/>
    <property type="evidence" value="ECO:0007669"/>
    <property type="project" value="InterPro"/>
</dbReference>
<dbReference type="GO" id="GO:0015979">
    <property type="term" value="P:photosynthesis"/>
    <property type="evidence" value="ECO:0007669"/>
    <property type="project" value="UniProtKB-UniRule"/>
</dbReference>
<dbReference type="Gene3D" id="6.10.250.2070">
    <property type="match status" value="1"/>
</dbReference>
<dbReference type="HAMAP" id="MF_01305">
    <property type="entry name" value="PSII_PsbJ"/>
    <property type="match status" value="1"/>
</dbReference>
<dbReference type="InterPro" id="IPR002682">
    <property type="entry name" value="PSII_PsbJ"/>
</dbReference>
<dbReference type="InterPro" id="IPR037267">
    <property type="entry name" value="PSII_PsbJ_sf"/>
</dbReference>
<dbReference type="NCBIfam" id="NF002722">
    <property type="entry name" value="PRK02565.1"/>
    <property type="match status" value="1"/>
</dbReference>
<dbReference type="PANTHER" id="PTHR34812">
    <property type="entry name" value="PHOTOSYSTEM II REACTION CENTER PROTEIN J"/>
    <property type="match status" value="1"/>
</dbReference>
<dbReference type="PANTHER" id="PTHR34812:SF3">
    <property type="entry name" value="PHOTOSYSTEM II REACTION CENTER PROTEIN J"/>
    <property type="match status" value="1"/>
</dbReference>
<dbReference type="Pfam" id="PF01788">
    <property type="entry name" value="PsbJ"/>
    <property type="match status" value="1"/>
</dbReference>
<dbReference type="SUPFAM" id="SSF161021">
    <property type="entry name" value="Photosystem II reaction center protein J, PsbJ"/>
    <property type="match status" value="1"/>
</dbReference>
<protein>
    <recommendedName>
        <fullName evidence="1">Photosystem II reaction center protein J</fullName>
        <shortName evidence="1">PSII-J</shortName>
    </recommendedName>
</protein>
<proteinExistence type="inferred from homology"/>
<feature type="chain" id="PRO_0000292250" description="Photosystem II reaction center protein J">
    <location>
        <begin position="1"/>
        <end position="42"/>
    </location>
</feature>
<feature type="transmembrane region" description="Helical" evidence="1">
    <location>
        <begin position="10"/>
        <end position="30"/>
    </location>
</feature>
<gene>
    <name evidence="1" type="primary">psbJ</name>
</gene>
<accession>Q19V80</accession>
<comment type="function">
    <text evidence="1">One of the components of the core complex of photosystem II (PSII). PSII is a light-driven water:plastoquinone oxidoreductase that uses light energy to abstract electrons from H(2)O, generating O(2) and a proton gradient subsequently used for ATP formation. It consists of a core antenna complex that captures photons, and an electron transfer chain that converts photonic excitation into a charge separation.</text>
</comment>
<comment type="subunit">
    <text evidence="1">PSII is composed of 1 copy each of membrane proteins PsbA, PsbB, PsbC, PsbD, PsbE, PsbF, PsbH, PsbI, PsbJ, PsbK, PsbL, PsbM, PsbT, PsbX, PsbY, PsbZ, Psb30/Ycf12, at least 3 peripheral proteins of the oxygen-evolving complex and a large number of cofactors. It forms dimeric complexes.</text>
</comment>
<comment type="subcellular location">
    <subcellularLocation>
        <location evidence="1">Plastid</location>
        <location evidence="1">Chloroplast thylakoid membrane</location>
        <topology evidence="1">Single-pass membrane protein</topology>
    </subcellularLocation>
</comment>
<comment type="similarity">
    <text evidence="1">Belongs to the PsbJ family.</text>
</comment>
<sequence>MSNTGTTGRIPLWLVATVAGLAVIALLGVFFYGSYSGLGSSL</sequence>
<keyword id="KW-0150">Chloroplast</keyword>
<keyword id="KW-0472">Membrane</keyword>
<keyword id="KW-0602">Photosynthesis</keyword>
<keyword id="KW-0604">Photosystem II</keyword>
<keyword id="KW-0934">Plastid</keyword>
<keyword id="KW-0674">Reaction center</keyword>
<keyword id="KW-0793">Thylakoid</keyword>
<keyword id="KW-0812">Transmembrane</keyword>
<keyword id="KW-1133">Transmembrane helix</keyword>